<reference key="1">
    <citation type="journal article" date="2008" name="PLoS ONE">
        <title>Comparative analysis of Acinetobacters: three genomes for three lifestyles.</title>
        <authorList>
            <person name="Vallenet D."/>
            <person name="Nordmann P."/>
            <person name="Barbe V."/>
            <person name="Poirel L."/>
            <person name="Mangenot S."/>
            <person name="Bataille E."/>
            <person name="Dossat C."/>
            <person name="Gas S."/>
            <person name="Kreimeyer A."/>
            <person name="Lenoble P."/>
            <person name="Oztas S."/>
            <person name="Poulain J."/>
            <person name="Segurens B."/>
            <person name="Robert C."/>
            <person name="Abergel C."/>
            <person name="Claverie J.-M."/>
            <person name="Raoult D."/>
            <person name="Medigue C."/>
            <person name="Weissenbach J."/>
            <person name="Cruveiller S."/>
        </authorList>
    </citation>
    <scope>NUCLEOTIDE SEQUENCE [LARGE SCALE GENOMIC DNA]</scope>
    <source>
        <strain>SDF</strain>
    </source>
</reference>
<accession>B0VQS0</accession>
<sequence length="106" mass="11604">MNNERIYQVLKGLVFSEKAQVLGDTAGVQVFKVDINATKLEIKKAVEKLFGVEVVKVNTTITKGKTKRFGRTLGRRSDVKKAYVTLKAGQDVEMADLGDTAESAAE</sequence>
<protein>
    <recommendedName>
        <fullName evidence="1">Large ribosomal subunit protein uL23</fullName>
    </recommendedName>
    <alternativeName>
        <fullName evidence="2">50S ribosomal protein L23</fullName>
    </alternativeName>
</protein>
<keyword id="KW-0687">Ribonucleoprotein</keyword>
<keyword id="KW-0689">Ribosomal protein</keyword>
<keyword id="KW-0694">RNA-binding</keyword>
<keyword id="KW-0699">rRNA-binding</keyword>
<organism>
    <name type="scientific">Acinetobacter baumannii (strain SDF)</name>
    <dbReference type="NCBI Taxonomy" id="509170"/>
    <lineage>
        <taxon>Bacteria</taxon>
        <taxon>Pseudomonadati</taxon>
        <taxon>Pseudomonadota</taxon>
        <taxon>Gammaproteobacteria</taxon>
        <taxon>Moraxellales</taxon>
        <taxon>Moraxellaceae</taxon>
        <taxon>Acinetobacter</taxon>
        <taxon>Acinetobacter calcoaceticus/baumannii complex</taxon>
    </lineage>
</organism>
<evidence type="ECO:0000255" key="1">
    <source>
        <dbReference type="HAMAP-Rule" id="MF_01369"/>
    </source>
</evidence>
<evidence type="ECO:0000305" key="2"/>
<dbReference type="EMBL" id="CU468230">
    <property type="protein sequence ID" value="CAO99816.1"/>
    <property type="molecule type" value="Genomic_DNA"/>
</dbReference>
<dbReference type="SMR" id="B0VQS0"/>
<dbReference type="KEGG" id="abm:ABSDF0425"/>
<dbReference type="HOGENOM" id="CLU_037562_3_1_6"/>
<dbReference type="Proteomes" id="UP000001741">
    <property type="component" value="Chromosome"/>
</dbReference>
<dbReference type="GO" id="GO:1990904">
    <property type="term" value="C:ribonucleoprotein complex"/>
    <property type="evidence" value="ECO:0007669"/>
    <property type="project" value="UniProtKB-KW"/>
</dbReference>
<dbReference type="GO" id="GO:0005840">
    <property type="term" value="C:ribosome"/>
    <property type="evidence" value="ECO:0007669"/>
    <property type="project" value="UniProtKB-KW"/>
</dbReference>
<dbReference type="GO" id="GO:0019843">
    <property type="term" value="F:rRNA binding"/>
    <property type="evidence" value="ECO:0007669"/>
    <property type="project" value="UniProtKB-UniRule"/>
</dbReference>
<dbReference type="GO" id="GO:0003735">
    <property type="term" value="F:structural constituent of ribosome"/>
    <property type="evidence" value="ECO:0007669"/>
    <property type="project" value="InterPro"/>
</dbReference>
<dbReference type="GO" id="GO:0006412">
    <property type="term" value="P:translation"/>
    <property type="evidence" value="ECO:0007669"/>
    <property type="project" value="UniProtKB-UniRule"/>
</dbReference>
<dbReference type="FunFam" id="3.30.70.330:FF:000001">
    <property type="entry name" value="50S ribosomal protein L23"/>
    <property type="match status" value="1"/>
</dbReference>
<dbReference type="Gene3D" id="3.30.70.330">
    <property type="match status" value="1"/>
</dbReference>
<dbReference type="HAMAP" id="MF_01369_B">
    <property type="entry name" value="Ribosomal_uL23_B"/>
    <property type="match status" value="1"/>
</dbReference>
<dbReference type="InterPro" id="IPR012677">
    <property type="entry name" value="Nucleotide-bd_a/b_plait_sf"/>
</dbReference>
<dbReference type="InterPro" id="IPR013025">
    <property type="entry name" value="Ribosomal_uL23-like"/>
</dbReference>
<dbReference type="InterPro" id="IPR012678">
    <property type="entry name" value="Ribosomal_uL23/eL15/eS24_sf"/>
</dbReference>
<dbReference type="NCBIfam" id="NF004359">
    <property type="entry name" value="PRK05738.1-3"/>
    <property type="match status" value="1"/>
</dbReference>
<dbReference type="NCBIfam" id="NF004363">
    <property type="entry name" value="PRK05738.2-4"/>
    <property type="match status" value="1"/>
</dbReference>
<dbReference type="PANTHER" id="PTHR11620">
    <property type="entry name" value="60S RIBOSOMAL PROTEIN L23A"/>
    <property type="match status" value="1"/>
</dbReference>
<dbReference type="Pfam" id="PF00276">
    <property type="entry name" value="Ribosomal_L23"/>
    <property type="match status" value="1"/>
</dbReference>
<dbReference type="SUPFAM" id="SSF54189">
    <property type="entry name" value="Ribosomal proteins S24e, L23 and L15e"/>
    <property type="match status" value="1"/>
</dbReference>
<gene>
    <name evidence="1" type="primary">rplW</name>
    <name type="ordered locus">ABSDF0425</name>
</gene>
<comment type="function">
    <text evidence="1">One of the early assembly proteins it binds 23S rRNA. One of the proteins that surrounds the polypeptide exit tunnel on the outside of the ribosome. Forms the main docking site for trigger factor binding to the ribosome.</text>
</comment>
<comment type="subunit">
    <text evidence="1">Part of the 50S ribosomal subunit. Contacts protein L29, and trigger factor when it is bound to the ribosome.</text>
</comment>
<comment type="similarity">
    <text evidence="1">Belongs to the universal ribosomal protein uL23 family.</text>
</comment>
<feature type="chain" id="PRO_1000144518" description="Large ribosomal subunit protein uL23">
    <location>
        <begin position="1"/>
        <end position="106"/>
    </location>
</feature>
<name>RL23_ACIBS</name>
<proteinExistence type="inferred from homology"/>